<dbReference type="EC" id="3.1.-.-" evidence="1"/>
<dbReference type="EMBL" id="CP000822">
    <property type="protein sequence ID" value="ABV13614.1"/>
    <property type="molecule type" value="Genomic_DNA"/>
</dbReference>
<dbReference type="RefSeq" id="WP_012133335.1">
    <property type="nucleotide sequence ID" value="NC_009792.1"/>
</dbReference>
<dbReference type="SMR" id="A8AJF1"/>
<dbReference type="STRING" id="290338.CKO_02504"/>
<dbReference type="GeneID" id="45136382"/>
<dbReference type="KEGG" id="cko:CKO_02504"/>
<dbReference type="HOGENOM" id="CLU_106710_0_1_6"/>
<dbReference type="OrthoDB" id="9807740at2"/>
<dbReference type="Proteomes" id="UP000008148">
    <property type="component" value="Chromosome"/>
</dbReference>
<dbReference type="GO" id="GO:0005737">
    <property type="term" value="C:cytoplasm"/>
    <property type="evidence" value="ECO:0007669"/>
    <property type="project" value="UniProtKB-SubCell"/>
</dbReference>
<dbReference type="GO" id="GO:0004222">
    <property type="term" value="F:metalloendopeptidase activity"/>
    <property type="evidence" value="ECO:0007669"/>
    <property type="project" value="InterPro"/>
</dbReference>
<dbReference type="GO" id="GO:0004521">
    <property type="term" value="F:RNA endonuclease activity"/>
    <property type="evidence" value="ECO:0007669"/>
    <property type="project" value="UniProtKB-UniRule"/>
</dbReference>
<dbReference type="GO" id="GO:0008270">
    <property type="term" value="F:zinc ion binding"/>
    <property type="evidence" value="ECO:0007669"/>
    <property type="project" value="UniProtKB-UniRule"/>
</dbReference>
<dbReference type="GO" id="GO:0006364">
    <property type="term" value="P:rRNA processing"/>
    <property type="evidence" value="ECO:0007669"/>
    <property type="project" value="UniProtKB-UniRule"/>
</dbReference>
<dbReference type="FunFam" id="3.40.390.30:FF:000001">
    <property type="entry name" value="Endoribonuclease YbeY"/>
    <property type="match status" value="1"/>
</dbReference>
<dbReference type="Gene3D" id="3.40.390.30">
    <property type="entry name" value="Metalloproteases ('zincins'), catalytic domain"/>
    <property type="match status" value="1"/>
</dbReference>
<dbReference type="HAMAP" id="MF_00009">
    <property type="entry name" value="Endoribonucl_YbeY"/>
    <property type="match status" value="1"/>
</dbReference>
<dbReference type="InterPro" id="IPR023091">
    <property type="entry name" value="MetalPrtase_cat_dom_sf_prd"/>
</dbReference>
<dbReference type="InterPro" id="IPR002036">
    <property type="entry name" value="YbeY"/>
</dbReference>
<dbReference type="InterPro" id="IPR020549">
    <property type="entry name" value="YbeY_CS"/>
</dbReference>
<dbReference type="NCBIfam" id="TIGR00043">
    <property type="entry name" value="rRNA maturation RNase YbeY"/>
    <property type="match status" value="1"/>
</dbReference>
<dbReference type="PANTHER" id="PTHR46986">
    <property type="entry name" value="ENDORIBONUCLEASE YBEY, CHLOROPLASTIC"/>
    <property type="match status" value="1"/>
</dbReference>
<dbReference type="PANTHER" id="PTHR46986:SF1">
    <property type="entry name" value="ENDORIBONUCLEASE YBEY, CHLOROPLASTIC"/>
    <property type="match status" value="1"/>
</dbReference>
<dbReference type="Pfam" id="PF02130">
    <property type="entry name" value="YbeY"/>
    <property type="match status" value="1"/>
</dbReference>
<dbReference type="SUPFAM" id="SSF55486">
    <property type="entry name" value="Metalloproteases ('zincins'), catalytic domain"/>
    <property type="match status" value="1"/>
</dbReference>
<dbReference type="PROSITE" id="PS01306">
    <property type="entry name" value="UPF0054"/>
    <property type="match status" value="1"/>
</dbReference>
<name>YBEY_CITK8</name>
<keyword id="KW-0963">Cytoplasm</keyword>
<keyword id="KW-0255">Endonuclease</keyword>
<keyword id="KW-0378">Hydrolase</keyword>
<keyword id="KW-0479">Metal-binding</keyword>
<keyword id="KW-0540">Nuclease</keyword>
<keyword id="KW-1185">Reference proteome</keyword>
<keyword id="KW-0690">Ribosome biogenesis</keyword>
<keyword id="KW-0698">rRNA processing</keyword>
<keyword id="KW-0862">Zinc</keyword>
<reference key="1">
    <citation type="submission" date="2007-08" db="EMBL/GenBank/DDBJ databases">
        <authorList>
            <consortium name="The Citrobacter koseri Genome Sequencing Project"/>
            <person name="McClelland M."/>
            <person name="Sanderson E.K."/>
            <person name="Porwollik S."/>
            <person name="Spieth J."/>
            <person name="Clifton W.S."/>
            <person name="Latreille P."/>
            <person name="Courtney L."/>
            <person name="Wang C."/>
            <person name="Pepin K."/>
            <person name="Bhonagiri V."/>
            <person name="Nash W."/>
            <person name="Johnson M."/>
            <person name="Thiruvilangam P."/>
            <person name="Wilson R."/>
        </authorList>
    </citation>
    <scope>NUCLEOTIDE SEQUENCE [LARGE SCALE GENOMIC DNA]</scope>
    <source>
        <strain>ATCC BAA-895 / CDC 4225-83 / SGSC4696</strain>
    </source>
</reference>
<proteinExistence type="inferred from homology"/>
<evidence type="ECO:0000255" key="1">
    <source>
        <dbReference type="HAMAP-Rule" id="MF_00009"/>
    </source>
</evidence>
<gene>
    <name evidence="1" type="primary">ybeY</name>
    <name type="ordered locus">CKO_02504</name>
</gene>
<sequence length="155" mass="17675">MSQVILDLQLACEDHSGLPEESQFQTWLNAVIPQFQEESEVTIRLVDEAESHDLNLTYRGKDKPTNVLSFPFEAPPGMEMPLLGDLIICRQVVEQEAKEQDKPLEAHWAHMVVHGSLHLLGYDHIEDDEAEEMEALETEIMLALGYEDPYISEKD</sequence>
<feature type="chain" id="PRO_1000000713" description="Endoribonuclease YbeY">
    <location>
        <begin position="1"/>
        <end position="155"/>
    </location>
</feature>
<feature type="binding site" evidence="1">
    <location>
        <position position="114"/>
    </location>
    <ligand>
        <name>Zn(2+)</name>
        <dbReference type="ChEBI" id="CHEBI:29105"/>
        <note>catalytic</note>
    </ligand>
</feature>
<feature type="binding site" evidence="1">
    <location>
        <position position="118"/>
    </location>
    <ligand>
        <name>Zn(2+)</name>
        <dbReference type="ChEBI" id="CHEBI:29105"/>
        <note>catalytic</note>
    </ligand>
</feature>
<feature type="binding site" evidence="1">
    <location>
        <position position="124"/>
    </location>
    <ligand>
        <name>Zn(2+)</name>
        <dbReference type="ChEBI" id="CHEBI:29105"/>
        <note>catalytic</note>
    </ligand>
</feature>
<protein>
    <recommendedName>
        <fullName evidence="1">Endoribonuclease YbeY</fullName>
        <ecNumber evidence="1">3.1.-.-</ecNumber>
    </recommendedName>
</protein>
<comment type="function">
    <text evidence="1">Single strand-specific metallo-endoribonuclease involved in late-stage 70S ribosome quality control and in maturation of the 3' terminus of the 16S rRNA.</text>
</comment>
<comment type="cofactor">
    <cofactor evidence="1">
        <name>Zn(2+)</name>
        <dbReference type="ChEBI" id="CHEBI:29105"/>
    </cofactor>
    <text evidence="1">Binds 1 zinc ion.</text>
</comment>
<comment type="subcellular location">
    <subcellularLocation>
        <location evidence="1">Cytoplasm</location>
    </subcellularLocation>
</comment>
<comment type="similarity">
    <text evidence="1">Belongs to the endoribonuclease YbeY family.</text>
</comment>
<organism>
    <name type="scientific">Citrobacter koseri (strain ATCC BAA-895 / CDC 4225-83 / SGSC4696)</name>
    <dbReference type="NCBI Taxonomy" id="290338"/>
    <lineage>
        <taxon>Bacteria</taxon>
        <taxon>Pseudomonadati</taxon>
        <taxon>Pseudomonadota</taxon>
        <taxon>Gammaproteobacteria</taxon>
        <taxon>Enterobacterales</taxon>
        <taxon>Enterobacteriaceae</taxon>
        <taxon>Citrobacter</taxon>
    </lineage>
</organism>
<accession>A8AJF1</accession>